<protein>
    <recommendedName>
        <fullName evidence="1">Regulator of sigma D</fullName>
    </recommendedName>
</protein>
<reference key="1">
    <citation type="journal article" date="2009" name="PLoS Genet.">
        <title>Organised genome dynamics in the Escherichia coli species results in highly diverse adaptive paths.</title>
        <authorList>
            <person name="Touchon M."/>
            <person name="Hoede C."/>
            <person name="Tenaillon O."/>
            <person name="Barbe V."/>
            <person name="Baeriswyl S."/>
            <person name="Bidet P."/>
            <person name="Bingen E."/>
            <person name="Bonacorsi S."/>
            <person name="Bouchier C."/>
            <person name="Bouvet O."/>
            <person name="Calteau A."/>
            <person name="Chiapello H."/>
            <person name="Clermont O."/>
            <person name="Cruveiller S."/>
            <person name="Danchin A."/>
            <person name="Diard M."/>
            <person name="Dossat C."/>
            <person name="Karoui M.E."/>
            <person name="Frapy E."/>
            <person name="Garry L."/>
            <person name="Ghigo J.M."/>
            <person name="Gilles A.M."/>
            <person name="Johnson J."/>
            <person name="Le Bouguenec C."/>
            <person name="Lescat M."/>
            <person name="Mangenot S."/>
            <person name="Martinez-Jehanne V."/>
            <person name="Matic I."/>
            <person name="Nassif X."/>
            <person name="Oztas S."/>
            <person name="Petit M.A."/>
            <person name="Pichon C."/>
            <person name="Rouy Z."/>
            <person name="Ruf C.S."/>
            <person name="Schneider D."/>
            <person name="Tourret J."/>
            <person name="Vacherie B."/>
            <person name="Vallenet D."/>
            <person name="Medigue C."/>
            <person name="Rocha E.P.C."/>
            <person name="Denamur E."/>
        </authorList>
    </citation>
    <scope>NUCLEOTIDE SEQUENCE [LARGE SCALE GENOMIC DNA]</scope>
    <source>
        <strain>ATCC 35469 / DSM 13698 / BCRC 15582 / CCUG 18766 / IAM 14443 / JCM 21226 / LMG 7866 / NBRC 102419 / NCTC 12128 / CDC 0568-73</strain>
    </source>
</reference>
<organism>
    <name type="scientific">Escherichia fergusonii (strain ATCC 35469 / DSM 13698 / CCUG 18766 / IAM 14443 / JCM 21226 / LMG 7866 / NBRC 102419 / NCTC 12128 / CDC 0568-73)</name>
    <dbReference type="NCBI Taxonomy" id="585054"/>
    <lineage>
        <taxon>Bacteria</taxon>
        <taxon>Pseudomonadati</taxon>
        <taxon>Pseudomonadota</taxon>
        <taxon>Gammaproteobacteria</taxon>
        <taxon>Enterobacterales</taxon>
        <taxon>Enterobacteriaceae</taxon>
        <taxon>Escherichia</taxon>
    </lineage>
</organism>
<dbReference type="EMBL" id="CU928158">
    <property type="protein sequence ID" value="CAQ91210.1"/>
    <property type="molecule type" value="Genomic_DNA"/>
</dbReference>
<dbReference type="RefSeq" id="WP_000934303.1">
    <property type="nucleotide sequence ID" value="NC_011740.1"/>
</dbReference>
<dbReference type="SMR" id="B7LUK7"/>
<dbReference type="GeneID" id="75059363"/>
<dbReference type="KEGG" id="efe:EFER_3759"/>
<dbReference type="HOGENOM" id="CLU_142729_0_0_6"/>
<dbReference type="OrthoDB" id="5567237at2"/>
<dbReference type="Proteomes" id="UP000000745">
    <property type="component" value="Chromosome"/>
</dbReference>
<dbReference type="GO" id="GO:0005737">
    <property type="term" value="C:cytoplasm"/>
    <property type="evidence" value="ECO:0007669"/>
    <property type="project" value="UniProtKB-SubCell"/>
</dbReference>
<dbReference type="GO" id="GO:0006355">
    <property type="term" value="P:regulation of DNA-templated transcription"/>
    <property type="evidence" value="ECO:0007669"/>
    <property type="project" value="InterPro"/>
</dbReference>
<dbReference type="FunFam" id="1.20.120.1370:FF:000001">
    <property type="entry name" value="Regulator of sigma D"/>
    <property type="match status" value="1"/>
</dbReference>
<dbReference type="Gene3D" id="1.20.120.1370">
    <property type="entry name" value="Regulator of RNA polymerase sigma(70) subunit, domain 4"/>
    <property type="match status" value="1"/>
</dbReference>
<dbReference type="HAMAP" id="MF_01181">
    <property type="entry name" value="Rsd"/>
    <property type="match status" value="1"/>
</dbReference>
<dbReference type="InterPro" id="IPR038309">
    <property type="entry name" value="Rsd/AlgQ_sf"/>
</dbReference>
<dbReference type="InterPro" id="IPR023785">
    <property type="entry name" value="Sigma70_reg_Rsd"/>
</dbReference>
<dbReference type="InterPro" id="IPR007448">
    <property type="entry name" value="Sigma70_reg_Rsd_AlgQ"/>
</dbReference>
<dbReference type="NCBIfam" id="NF008723">
    <property type="entry name" value="PRK11718.1"/>
    <property type="match status" value="1"/>
</dbReference>
<dbReference type="Pfam" id="PF04353">
    <property type="entry name" value="Rsd_AlgQ"/>
    <property type="match status" value="1"/>
</dbReference>
<dbReference type="PIRSF" id="PIRSF016548">
    <property type="entry name" value="Rsd_AlgQ"/>
    <property type="match status" value="1"/>
</dbReference>
<gene>
    <name evidence="1" type="primary">rsd</name>
    <name type="ordered locus">EFER_3759</name>
</gene>
<comment type="function">
    <text evidence="1">Binds RpoD and negatively regulates RpoD-mediated transcription activation by preventing the interaction between the primary sigma factor RpoD with the catalytic core of the RNA polymerase and with promoter DNA. May be involved in replacement of the RNA polymerase sigma subunit from RpoD to RpoS during the transition from exponential growth to the stationary phase.</text>
</comment>
<comment type="subunit">
    <text evidence="1">Interacts with RpoD.</text>
</comment>
<comment type="subcellular location">
    <subcellularLocation>
        <location evidence="1">Cytoplasm</location>
    </subcellularLocation>
</comment>
<comment type="similarity">
    <text evidence="1">Belongs to the Rsd/AlgQ family.</text>
</comment>
<feature type="chain" id="PRO_1000138196" description="Regulator of sigma D">
    <location>
        <begin position="1"/>
        <end position="158"/>
    </location>
</feature>
<evidence type="ECO:0000255" key="1">
    <source>
        <dbReference type="HAMAP-Rule" id="MF_01181"/>
    </source>
</evidence>
<accession>B7LUK7</accession>
<sequence>MLNQLDNLTERVRGSNKLVDRWLHVRKHLLVAYYNLVGIKPGKESYMRLNEKALDDFCQSLVDYLSAGHFSIYERILHKLEGNGQLARAAKIWPQLEANTQQIMDYYDSSLETAIDHDNYLEFQQVLSDIGEALEARFVLEDKLILLVLDAARVKYPA</sequence>
<name>RSD_ESCF3</name>
<proteinExistence type="inferred from homology"/>
<keyword id="KW-0963">Cytoplasm</keyword>
<keyword id="KW-0804">Transcription</keyword>
<keyword id="KW-0805">Transcription regulation</keyword>